<proteinExistence type="evidence at transcript level"/>
<feature type="chain" id="PRO_0000378567" description="RNA-binding protein 8A-B">
    <location>
        <begin position="1"/>
        <end position="174"/>
    </location>
</feature>
<feature type="domain" description="RRM" evidence="2">
    <location>
        <begin position="73"/>
        <end position="151"/>
    </location>
</feature>
<feature type="region of interest" description="Disordered" evidence="3">
    <location>
        <begin position="1"/>
        <end position="70"/>
    </location>
</feature>
<feature type="region of interest" description="Disordered" evidence="3">
    <location>
        <begin position="149"/>
        <end position="174"/>
    </location>
</feature>
<feature type="compositionally biased region" description="Basic and acidic residues" evidence="3">
    <location>
        <begin position="1"/>
        <end position="11"/>
    </location>
</feature>
<feature type="compositionally biased region" description="Basic residues" evidence="3">
    <location>
        <begin position="28"/>
        <end position="38"/>
    </location>
</feature>
<feature type="compositionally biased region" description="Basic and acidic residues" evidence="3">
    <location>
        <begin position="44"/>
        <end position="54"/>
    </location>
</feature>
<feature type="compositionally biased region" description="Basic residues" evidence="3">
    <location>
        <begin position="155"/>
        <end position="174"/>
    </location>
</feature>
<keyword id="KW-0963">Cytoplasm</keyword>
<keyword id="KW-0507">mRNA processing</keyword>
<keyword id="KW-0508">mRNA splicing</keyword>
<keyword id="KW-0509">mRNA transport</keyword>
<keyword id="KW-0866">Nonsense-mediated mRNA decay</keyword>
<keyword id="KW-0539">Nucleus</keyword>
<keyword id="KW-1185">Reference proteome</keyword>
<keyword id="KW-0694">RNA-binding</keyword>
<keyword id="KW-0747">Spliceosome</keyword>
<keyword id="KW-0810">Translation regulation</keyword>
<keyword id="KW-0813">Transport</keyword>
<name>RB8AB_XENLA</name>
<sequence length="174" mass="19778">MADVLDLHEAGGEDFAMDEDGDESIHKLKEKAKKRKGRGFGADEGTRTRIREDYDSVEQDGDEPGPQRSVEGWILFVTGVHEEATEEDIHDKFGEFGEIKNIHLNLDRRTGFLKGYALVEYETYKEALAAMEGLNGQDLMGQPVSVDWGFVRGPPKGKRRSGRRRSRSPERRRR</sequence>
<gene>
    <name type="primary">rbm8a-b</name>
    <name type="synonym">rbm8-b</name>
</gene>
<dbReference type="EMBL" id="BC056659">
    <property type="protein sequence ID" value="AAH56659.1"/>
    <property type="molecule type" value="mRNA"/>
</dbReference>
<dbReference type="RefSeq" id="NP_001079905.1">
    <property type="nucleotide sequence ID" value="NM_001086436.1"/>
</dbReference>
<dbReference type="SMR" id="Q6PH90"/>
<dbReference type="DNASU" id="379595"/>
<dbReference type="GeneID" id="379595"/>
<dbReference type="KEGG" id="xla:379595"/>
<dbReference type="AGR" id="Xenbase:XB-GENE-6255456"/>
<dbReference type="CTD" id="379595"/>
<dbReference type="Xenbase" id="XB-GENE-6255456">
    <property type="gene designation" value="rbm8a.L"/>
</dbReference>
<dbReference type="OMA" id="IYNHEEF"/>
<dbReference type="OrthoDB" id="15688at2759"/>
<dbReference type="Proteomes" id="UP000186698">
    <property type="component" value="Chromosome 8L"/>
</dbReference>
<dbReference type="Bgee" id="379595">
    <property type="expression patterns" value="Expressed in gastrula and 19 other cell types or tissues"/>
</dbReference>
<dbReference type="GO" id="GO:0005737">
    <property type="term" value="C:cytoplasm"/>
    <property type="evidence" value="ECO:0007669"/>
    <property type="project" value="UniProtKB-SubCell"/>
</dbReference>
<dbReference type="GO" id="GO:0035145">
    <property type="term" value="C:exon-exon junction complex"/>
    <property type="evidence" value="ECO:0000318"/>
    <property type="project" value="GO_Central"/>
</dbReference>
<dbReference type="GO" id="GO:0016607">
    <property type="term" value="C:nuclear speck"/>
    <property type="evidence" value="ECO:0007669"/>
    <property type="project" value="UniProtKB-SubCell"/>
</dbReference>
<dbReference type="GO" id="GO:0005634">
    <property type="term" value="C:nucleus"/>
    <property type="evidence" value="ECO:0000250"/>
    <property type="project" value="UniProtKB"/>
</dbReference>
<dbReference type="GO" id="GO:0071006">
    <property type="term" value="C:U2-type catalytic step 1 spliceosome"/>
    <property type="evidence" value="ECO:0000250"/>
    <property type="project" value="UniProtKB"/>
</dbReference>
<dbReference type="GO" id="GO:0003729">
    <property type="term" value="F:mRNA binding"/>
    <property type="evidence" value="ECO:0000318"/>
    <property type="project" value="GO_Central"/>
</dbReference>
<dbReference type="GO" id="GO:0000398">
    <property type="term" value="P:mRNA splicing, via spliceosome"/>
    <property type="evidence" value="ECO:0000250"/>
    <property type="project" value="UniProtKB"/>
</dbReference>
<dbReference type="GO" id="GO:0051028">
    <property type="term" value="P:mRNA transport"/>
    <property type="evidence" value="ECO:0007669"/>
    <property type="project" value="UniProtKB-KW"/>
</dbReference>
<dbReference type="GO" id="GO:0000184">
    <property type="term" value="P:nuclear-transcribed mRNA catabolic process, nonsense-mediated decay"/>
    <property type="evidence" value="ECO:0007669"/>
    <property type="project" value="UniProtKB-KW"/>
</dbReference>
<dbReference type="GO" id="GO:0000381">
    <property type="term" value="P:regulation of alternative mRNA splicing, via spliceosome"/>
    <property type="evidence" value="ECO:0000250"/>
    <property type="project" value="UniProtKB"/>
</dbReference>
<dbReference type="GO" id="GO:0006417">
    <property type="term" value="P:regulation of translation"/>
    <property type="evidence" value="ECO:0007669"/>
    <property type="project" value="UniProtKB-KW"/>
</dbReference>
<dbReference type="GO" id="GO:0008380">
    <property type="term" value="P:RNA splicing"/>
    <property type="evidence" value="ECO:0000318"/>
    <property type="project" value="GO_Central"/>
</dbReference>
<dbReference type="CDD" id="cd12324">
    <property type="entry name" value="RRM_RBM8"/>
    <property type="match status" value="1"/>
</dbReference>
<dbReference type="FunFam" id="3.30.70.330:FF:000157">
    <property type="entry name" value="RNA-binding protein 8A"/>
    <property type="match status" value="1"/>
</dbReference>
<dbReference type="Gene3D" id="3.30.70.330">
    <property type="match status" value="1"/>
</dbReference>
<dbReference type="InterPro" id="IPR012677">
    <property type="entry name" value="Nucleotide-bd_a/b_plait_sf"/>
</dbReference>
<dbReference type="InterPro" id="IPR035979">
    <property type="entry name" value="RBD_domain_sf"/>
</dbReference>
<dbReference type="InterPro" id="IPR008111">
    <property type="entry name" value="RNA-bd_8"/>
</dbReference>
<dbReference type="InterPro" id="IPR000504">
    <property type="entry name" value="RRM_dom"/>
</dbReference>
<dbReference type="InterPro" id="IPR033744">
    <property type="entry name" value="RRM_RBM8"/>
</dbReference>
<dbReference type="PANTHER" id="PTHR45894">
    <property type="entry name" value="RNA-BINDING PROTEIN 8A"/>
    <property type="match status" value="1"/>
</dbReference>
<dbReference type="Pfam" id="PF00076">
    <property type="entry name" value="RRM_1"/>
    <property type="match status" value="1"/>
</dbReference>
<dbReference type="PRINTS" id="PR01738">
    <property type="entry name" value="RNABINDINGM8"/>
</dbReference>
<dbReference type="SMART" id="SM00360">
    <property type="entry name" value="RRM"/>
    <property type="match status" value="1"/>
</dbReference>
<dbReference type="SUPFAM" id="SSF54928">
    <property type="entry name" value="RNA-binding domain, RBD"/>
    <property type="match status" value="1"/>
</dbReference>
<dbReference type="PROSITE" id="PS50102">
    <property type="entry name" value="RRM"/>
    <property type="match status" value="1"/>
</dbReference>
<reference key="1">
    <citation type="submission" date="2003-08" db="EMBL/GenBank/DDBJ databases">
        <authorList>
            <consortium name="NIH - Xenopus Gene Collection (XGC) project"/>
        </authorList>
    </citation>
    <scope>NUCLEOTIDE SEQUENCE [LARGE SCALE MRNA]</scope>
    <source>
        <tissue>Kidney</tissue>
    </source>
</reference>
<evidence type="ECO:0000250" key="1">
    <source>
        <dbReference type="UniProtKB" id="Q9Y5S9"/>
    </source>
</evidence>
<evidence type="ECO:0000255" key="2">
    <source>
        <dbReference type="PROSITE-ProRule" id="PRU00176"/>
    </source>
</evidence>
<evidence type="ECO:0000256" key="3">
    <source>
        <dbReference type="SAM" id="MobiDB-lite"/>
    </source>
</evidence>
<evidence type="ECO:0000305" key="4"/>
<protein>
    <recommendedName>
        <fullName>RNA-binding protein 8A-B</fullName>
    </recommendedName>
    <alternativeName>
        <fullName>RNA-binding motif protein 8A-B</fullName>
    </alternativeName>
    <alternativeName>
        <fullName>Ribonucleoprotein RBM8A-B</fullName>
    </alternativeName>
</protein>
<accession>Q6PH90</accession>
<comment type="function">
    <text evidence="1">Required for pre-mRNA splicing as component of the spliceosome (By similarity). Core component of the splicing-dependent multiprotein exon junction complex (EJC) deposited at splice junctions on mRNAs. The EJC is a dynamic structure consisting of core proteins and several peripheral nuclear and cytoplasmic associated factors that join the complex only transiently either during EJC assembly or during subsequent mRNA metabolism. The EJC marks the position of the exon-exon junction in the mature mRNA for the gene expression machinery and the core components remain bound to spliced mRNAs throughout all stages of mRNA metabolism thereby influencing downstream processes including nuclear mRNA export, subcellular mRNA localization, translation efficiency and nonsense-mediated mRNA decay (NMD). Its removal from cytoplasmic mRNAs requires translation initiation from EJC-bearing spliced mRNAs. Associates preferentially with mRNAs produced by splicing. Does not interact with pre-mRNAs, introns, or mRNAs produced from intronless cDNAs. Associates with both nuclear mRNAs and newly exported cytoplasmic mRNAs (By similarity).</text>
</comment>
<comment type="subunit">
    <text evidence="1">Part of the mRNA splicing-dependent exon junction complex (EJC) complex; the core complex contains casc3, eif4a3, magoh, and rbm8a. Identified in the spliceosome C complex. Associates with polysomes.</text>
</comment>
<comment type="subcellular location">
    <subcellularLocation>
        <location evidence="1">Nucleus</location>
    </subcellularLocation>
    <subcellularLocation>
        <location evidence="1">Nucleus speckle</location>
    </subcellularLocation>
    <subcellularLocation>
        <location evidence="1">Cytoplasm</location>
    </subcellularLocation>
    <text evidence="1">Nucleocytoplasmic shuttling protein. Travels to the cytoplasm as part of the exon junction complex (EJC) bound to mRNA.</text>
</comment>
<comment type="similarity">
    <text evidence="4">Belongs to the RBM8A family.</text>
</comment>
<organism>
    <name type="scientific">Xenopus laevis</name>
    <name type="common">African clawed frog</name>
    <dbReference type="NCBI Taxonomy" id="8355"/>
    <lineage>
        <taxon>Eukaryota</taxon>
        <taxon>Metazoa</taxon>
        <taxon>Chordata</taxon>
        <taxon>Craniata</taxon>
        <taxon>Vertebrata</taxon>
        <taxon>Euteleostomi</taxon>
        <taxon>Amphibia</taxon>
        <taxon>Batrachia</taxon>
        <taxon>Anura</taxon>
        <taxon>Pipoidea</taxon>
        <taxon>Pipidae</taxon>
        <taxon>Xenopodinae</taxon>
        <taxon>Xenopus</taxon>
        <taxon>Xenopus</taxon>
    </lineage>
</organism>